<evidence type="ECO:0000255" key="1">
    <source>
        <dbReference type="HAMAP-Rule" id="MF_01218"/>
    </source>
</evidence>
<sequence length="209" mass="22934">MGKVHVYDHPLIQHKMTIMRKVETGTKQFRELVDEVSSLMAYEITRSLPLTDVEIETPVSVSTQKMIAGKKLGIVPILRAGLGMVDGFLKMMPNVKVGHIGLYRDPETLEPHEYYLKLPTDVTERDFIVVDPMLATGGSAVDAIASLKKHGAKSIKLACLCAAPEGVERVQAEHPDVEIYLAALDEKLNDHGYIVPGLGDAGDRLFGTK</sequence>
<comment type="function">
    <text evidence="1">Catalyzes the conversion of uracil and 5-phospho-alpha-D-ribose 1-diphosphate (PRPP) to UMP and diphosphate.</text>
</comment>
<comment type="catalytic activity">
    <reaction evidence="1">
        <text>UMP + diphosphate = 5-phospho-alpha-D-ribose 1-diphosphate + uracil</text>
        <dbReference type="Rhea" id="RHEA:13017"/>
        <dbReference type="ChEBI" id="CHEBI:17568"/>
        <dbReference type="ChEBI" id="CHEBI:33019"/>
        <dbReference type="ChEBI" id="CHEBI:57865"/>
        <dbReference type="ChEBI" id="CHEBI:58017"/>
        <dbReference type="EC" id="2.4.2.9"/>
    </reaction>
</comment>
<comment type="cofactor">
    <cofactor evidence="1">
        <name>Mg(2+)</name>
        <dbReference type="ChEBI" id="CHEBI:18420"/>
    </cofactor>
    <text evidence="1">Binds 1 Mg(2+) ion per subunit. The magnesium is bound as Mg-PRPP.</text>
</comment>
<comment type="activity regulation">
    <text evidence="1">Allosterically activated by GTP.</text>
</comment>
<comment type="pathway">
    <text evidence="1">Pyrimidine metabolism; UMP biosynthesis via salvage pathway; UMP from uracil: step 1/1.</text>
</comment>
<comment type="similarity">
    <text evidence="1">Belongs to the UPRTase family.</text>
</comment>
<reference key="1">
    <citation type="journal article" date="2011" name="J. Bacteriol.">
        <title>Complete genome sequence of the Thermophilic Bacterium Exiguobacterium sp. AT1b.</title>
        <authorList>
            <person name="Vishnivetskaya T.A."/>
            <person name="Lucas S."/>
            <person name="Copeland A."/>
            <person name="Lapidus A."/>
            <person name="Glavina del Rio T."/>
            <person name="Dalin E."/>
            <person name="Tice H."/>
            <person name="Bruce D.C."/>
            <person name="Goodwin L.A."/>
            <person name="Pitluck S."/>
            <person name="Saunders E."/>
            <person name="Brettin T."/>
            <person name="Detter C."/>
            <person name="Han C."/>
            <person name="Larimer F."/>
            <person name="Land M.L."/>
            <person name="Hauser L.J."/>
            <person name="Kyrpides N.C."/>
            <person name="Ovchinnikova G."/>
            <person name="Kathariou S."/>
            <person name="Ramaley R.F."/>
            <person name="Rodrigues D.F."/>
            <person name="Hendrix C."/>
            <person name="Richardson P."/>
            <person name="Tiedje J.M."/>
        </authorList>
    </citation>
    <scope>NUCLEOTIDE SEQUENCE [LARGE SCALE GENOMIC DNA]</scope>
    <source>
        <strain>ATCC BAA-1283 / AT1b</strain>
    </source>
</reference>
<accession>C4KYT2</accession>
<organism>
    <name type="scientific">Exiguobacterium sp. (strain ATCC BAA-1283 / AT1b)</name>
    <dbReference type="NCBI Taxonomy" id="360911"/>
    <lineage>
        <taxon>Bacteria</taxon>
        <taxon>Bacillati</taxon>
        <taxon>Bacillota</taxon>
        <taxon>Bacilli</taxon>
        <taxon>Bacillales</taxon>
        <taxon>Bacillales Family XII. Incertae Sedis</taxon>
        <taxon>Exiguobacterium</taxon>
    </lineage>
</organism>
<dbReference type="EC" id="2.4.2.9" evidence="1"/>
<dbReference type="EMBL" id="CP001615">
    <property type="protein sequence ID" value="ACQ70245.1"/>
    <property type="molecule type" value="Genomic_DNA"/>
</dbReference>
<dbReference type="RefSeq" id="WP_012727364.1">
    <property type="nucleotide sequence ID" value="NC_012673.1"/>
</dbReference>
<dbReference type="SMR" id="C4KYT2"/>
<dbReference type="STRING" id="360911.EAT1b_1318"/>
<dbReference type="GeneID" id="94371062"/>
<dbReference type="KEGG" id="eat:EAT1b_1318"/>
<dbReference type="eggNOG" id="COG0035">
    <property type="taxonomic scope" value="Bacteria"/>
</dbReference>
<dbReference type="HOGENOM" id="CLU_067096_2_2_9"/>
<dbReference type="OrthoDB" id="9781675at2"/>
<dbReference type="UniPathway" id="UPA00574">
    <property type="reaction ID" value="UER00636"/>
</dbReference>
<dbReference type="Proteomes" id="UP000000716">
    <property type="component" value="Chromosome"/>
</dbReference>
<dbReference type="GO" id="GO:0005525">
    <property type="term" value="F:GTP binding"/>
    <property type="evidence" value="ECO:0007669"/>
    <property type="project" value="UniProtKB-KW"/>
</dbReference>
<dbReference type="GO" id="GO:0000287">
    <property type="term" value="F:magnesium ion binding"/>
    <property type="evidence" value="ECO:0007669"/>
    <property type="project" value="UniProtKB-UniRule"/>
</dbReference>
<dbReference type="GO" id="GO:0004845">
    <property type="term" value="F:uracil phosphoribosyltransferase activity"/>
    <property type="evidence" value="ECO:0007669"/>
    <property type="project" value="UniProtKB-UniRule"/>
</dbReference>
<dbReference type="GO" id="GO:0044206">
    <property type="term" value="P:UMP salvage"/>
    <property type="evidence" value="ECO:0007669"/>
    <property type="project" value="UniProtKB-UniRule"/>
</dbReference>
<dbReference type="GO" id="GO:0006223">
    <property type="term" value="P:uracil salvage"/>
    <property type="evidence" value="ECO:0007669"/>
    <property type="project" value="InterPro"/>
</dbReference>
<dbReference type="CDD" id="cd06223">
    <property type="entry name" value="PRTases_typeI"/>
    <property type="match status" value="1"/>
</dbReference>
<dbReference type="FunFam" id="3.40.50.2020:FF:000003">
    <property type="entry name" value="Uracil phosphoribosyltransferase"/>
    <property type="match status" value="1"/>
</dbReference>
<dbReference type="Gene3D" id="3.40.50.2020">
    <property type="match status" value="1"/>
</dbReference>
<dbReference type="HAMAP" id="MF_01218_B">
    <property type="entry name" value="Upp_B"/>
    <property type="match status" value="1"/>
</dbReference>
<dbReference type="InterPro" id="IPR000836">
    <property type="entry name" value="PRibTrfase_dom"/>
</dbReference>
<dbReference type="InterPro" id="IPR029057">
    <property type="entry name" value="PRTase-like"/>
</dbReference>
<dbReference type="InterPro" id="IPR034332">
    <property type="entry name" value="Upp_B"/>
</dbReference>
<dbReference type="InterPro" id="IPR050054">
    <property type="entry name" value="UPRTase/APRTase"/>
</dbReference>
<dbReference type="InterPro" id="IPR005765">
    <property type="entry name" value="Ura_phspho_trans"/>
</dbReference>
<dbReference type="NCBIfam" id="NF001097">
    <property type="entry name" value="PRK00129.1"/>
    <property type="match status" value="1"/>
</dbReference>
<dbReference type="NCBIfam" id="TIGR01091">
    <property type="entry name" value="upp"/>
    <property type="match status" value="1"/>
</dbReference>
<dbReference type="PANTHER" id="PTHR32315">
    <property type="entry name" value="ADENINE PHOSPHORIBOSYLTRANSFERASE"/>
    <property type="match status" value="1"/>
</dbReference>
<dbReference type="PANTHER" id="PTHR32315:SF4">
    <property type="entry name" value="URACIL PHOSPHORIBOSYLTRANSFERASE, CHLOROPLASTIC"/>
    <property type="match status" value="1"/>
</dbReference>
<dbReference type="Pfam" id="PF14681">
    <property type="entry name" value="UPRTase"/>
    <property type="match status" value="1"/>
</dbReference>
<dbReference type="SUPFAM" id="SSF53271">
    <property type="entry name" value="PRTase-like"/>
    <property type="match status" value="1"/>
</dbReference>
<proteinExistence type="inferred from homology"/>
<keyword id="KW-0021">Allosteric enzyme</keyword>
<keyword id="KW-0328">Glycosyltransferase</keyword>
<keyword id="KW-0342">GTP-binding</keyword>
<keyword id="KW-0460">Magnesium</keyword>
<keyword id="KW-0547">Nucleotide-binding</keyword>
<keyword id="KW-0808">Transferase</keyword>
<feature type="chain" id="PRO_1000213932" description="Uracil phosphoribosyltransferase">
    <location>
        <begin position="1"/>
        <end position="209"/>
    </location>
</feature>
<feature type="binding site" evidence="1">
    <location>
        <position position="79"/>
    </location>
    <ligand>
        <name>5-phospho-alpha-D-ribose 1-diphosphate</name>
        <dbReference type="ChEBI" id="CHEBI:58017"/>
    </ligand>
</feature>
<feature type="binding site" evidence="1">
    <location>
        <position position="104"/>
    </location>
    <ligand>
        <name>5-phospho-alpha-D-ribose 1-diphosphate</name>
        <dbReference type="ChEBI" id="CHEBI:58017"/>
    </ligand>
</feature>
<feature type="binding site" evidence="1">
    <location>
        <begin position="131"/>
        <end position="139"/>
    </location>
    <ligand>
        <name>5-phospho-alpha-D-ribose 1-diphosphate</name>
        <dbReference type="ChEBI" id="CHEBI:58017"/>
    </ligand>
</feature>
<feature type="binding site" evidence="1">
    <location>
        <position position="194"/>
    </location>
    <ligand>
        <name>uracil</name>
        <dbReference type="ChEBI" id="CHEBI:17568"/>
    </ligand>
</feature>
<feature type="binding site" evidence="1">
    <location>
        <begin position="199"/>
        <end position="201"/>
    </location>
    <ligand>
        <name>uracil</name>
        <dbReference type="ChEBI" id="CHEBI:17568"/>
    </ligand>
</feature>
<feature type="binding site" evidence="1">
    <location>
        <position position="200"/>
    </location>
    <ligand>
        <name>5-phospho-alpha-D-ribose 1-diphosphate</name>
        <dbReference type="ChEBI" id="CHEBI:58017"/>
    </ligand>
</feature>
<protein>
    <recommendedName>
        <fullName evidence="1">Uracil phosphoribosyltransferase</fullName>
        <ecNumber evidence="1">2.4.2.9</ecNumber>
    </recommendedName>
    <alternativeName>
        <fullName evidence="1">UMP pyrophosphorylase</fullName>
    </alternativeName>
    <alternativeName>
        <fullName evidence="1">UPRTase</fullName>
    </alternativeName>
</protein>
<name>UPP_EXISA</name>
<gene>
    <name evidence="1" type="primary">upp</name>
    <name type="ordered locus">EAT1b_1318</name>
</gene>